<proteinExistence type="inferred from homology"/>
<name>NU4LM_ASCSU</name>
<reference key="1">
    <citation type="journal article" date="1992" name="Genetics">
        <title>The mitochondrial genomes of two nematodes, Caenorhabditis elegans and Ascaris suum.</title>
        <authorList>
            <person name="Okimoto R."/>
            <person name="Macfarlane J.L."/>
            <person name="Clary D.O."/>
            <person name="Wolstenholme D.R."/>
        </authorList>
    </citation>
    <scope>NUCLEOTIDE SEQUENCE [GENOMIC DNA]</scope>
    <source>
        <tissue>Body wall muscle</tissue>
        <tissue>Egg</tissue>
    </source>
</reference>
<accession>P24874</accession>
<geneLocation type="mitochondrion"/>
<sequence>MIFIFISFLSLFFKWQRLMFILISLEFIVMSLFILFSGDLNEMMFFYFMCFSVVSSVLGMVVMVGNVKFYGSDLCLF</sequence>
<evidence type="ECO:0000250" key="1"/>
<evidence type="ECO:0000255" key="2"/>
<evidence type="ECO:0000305" key="3"/>
<comment type="function">
    <text evidence="1">Core subunit of the mitochondrial membrane respiratory chain NADH dehydrogenase (Complex I) that is believed to belong to the minimal assembly required for catalysis. Complex I functions in the transfer of electrons from NADH to the respiratory chain. The immediate electron acceptor for the enzyme is believed to be ubiquinone (By similarity).</text>
</comment>
<comment type="catalytic activity">
    <reaction>
        <text>a ubiquinone + NADH + 5 H(+)(in) = a ubiquinol + NAD(+) + 4 H(+)(out)</text>
        <dbReference type="Rhea" id="RHEA:29091"/>
        <dbReference type="Rhea" id="RHEA-COMP:9565"/>
        <dbReference type="Rhea" id="RHEA-COMP:9566"/>
        <dbReference type="ChEBI" id="CHEBI:15378"/>
        <dbReference type="ChEBI" id="CHEBI:16389"/>
        <dbReference type="ChEBI" id="CHEBI:17976"/>
        <dbReference type="ChEBI" id="CHEBI:57540"/>
        <dbReference type="ChEBI" id="CHEBI:57945"/>
        <dbReference type="EC" id="7.1.1.2"/>
    </reaction>
</comment>
<comment type="subcellular location">
    <subcellularLocation>
        <location evidence="1">Mitochondrion membrane</location>
        <topology evidence="1">Multi-pass membrane protein</topology>
    </subcellularLocation>
</comment>
<comment type="similarity">
    <text evidence="3">Belongs to the complex I subunit 4L family.</text>
</comment>
<gene>
    <name type="primary">ND4L</name>
</gene>
<feature type="chain" id="PRO_0000118389" description="NADH-ubiquinone oxidoreductase chain 4L">
    <location>
        <begin position="1"/>
        <end position="77"/>
    </location>
</feature>
<feature type="transmembrane region" description="Helical" evidence="2">
    <location>
        <begin position="18"/>
        <end position="38"/>
    </location>
</feature>
<feature type="transmembrane region" description="Helical" evidence="2">
    <location>
        <begin position="44"/>
        <end position="64"/>
    </location>
</feature>
<organism>
    <name type="scientific">Ascaris suum</name>
    <name type="common">Pig roundworm</name>
    <name type="synonym">Ascaris lumbricoides</name>
    <dbReference type="NCBI Taxonomy" id="6253"/>
    <lineage>
        <taxon>Eukaryota</taxon>
        <taxon>Metazoa</taxon>
        <taxon>Ecdysozoa</taxon>
        <taxon>Nematoda</taxon>
        <taxon>Chromadorea</taxon>
        <taxon>Rhabditida</taxon>
        <taxon>Spirurina</taxon>
        <taxon>Ascaridomorpha</taxon>
        <taxon>Ascaridoidea</taxon>
        <taxon>Ascarididae</taxon>
        <taxon>Ascaris</taxon>
    </lineage>
</organism>
<dbReference type="EC" id="7.1.1.2"/>
<dbReference type="EMBL" id="X54253">
    <property type="protein sequence ID" value="CAA38164.1"/>
    <property type="molecule type" value="Genomic_DNA"/>
</dbReference>
<dbReference type="PIR" id="S26015">
    <property type="entry name" value="S26015"/>
</dbReference>
<dbReference type="RefSeq" id="NP_006942.1">
    <property type="nucleotide sequence ID" value="NC_001327.1"/>
</dbReference>
<dbReference type="SMR" id="P24874"/>
<dbReference type="GeneID" id="807672"/>
<dbReference type="CTD" id="4539"/>
<dbReference type="GO" id="GO:0031966">
    <property type="term" value="C:mitochondrial membrane"/>
    <property type="evidence" value="ECO:0007669"/>
    <property type="project" value="UniProtKB-SubCell"/>
</dbReference>
<dbReference type="GO" id="GO:0008137">
    <property type="term" value="F:NADH dehydrogenase (ubiquinone) activity"/>
    <property type="evidence" value="ECO:0007669"/>
    <property type="project" value="UniProtKB-EC"/>
</dbReference>
<dbReference type="Gene3D" id="1.10.287.3510">
    <property type="match status" value="1"/>
</dbReference>
<keyword id="KW-0249">Electron transport</keyword>
<keyword id="KW-0472">Membrane</keyword>
<keyword id="KW-0496">Mitochondrion</keyword>
<keyword id="KW-0520">NAD</keyword>
<keyword id="KW-0679">Respiratory chain</keyword>
<keyword id="KW-1278">Translocase</keyword>
<keyword id="KW-0812">Transmembrane</keyword>
<keyword id="KW-1133">Transmembrane helix</keyword>
<keyword id="KW-0813">Transport</keyword>
<keyword id="KW-0830">Ubiquinone</keyword>
<protein>
    <recommendedName>
        <fullName>NADH-ubiquinone oxidoreductase chain 4L</fullName>
        <ecNumber>7.1.1.2</ecNumber>
    </recommendedName>
    <alternativeName>
        <fullName>NADH dehydrogenase subunit 4L</fullName>
    </alternativeName>
</protein>